<sequence>MDVVLLVKAAIMGVVEGLTEFLPISSTGHLILAGALLGFDDAKAQVFDVAIQTGAILAVILVYWAKIRATLHALPSERQAQRLAFNLAIGFFPAVLLGLLFGKAIKAHLFTPVVVASTFIIGGLVILWAERRAPAATRIHTLDAMTAPDALKVGLVQCLAMVPGTSRSGATIIGGMLLGLSRQAATDFSFFLAIPTLIGAGVYSLYQERALLTVADLPMFLTGLVFSFLSAWLCVRWLLRYIASHSFVPFAYYRIGFGLMVLVTASTGWVPWVD</sequence>
<feature type="chain" id="PRO_0000290779" description="Undecaprenyl-diphosphatase">
    <location>
        <begin position="1"/>
        <end position="274"/>
    </location>
</feature>
<feature type="transmembrane region" description="Helical" evidence="1">
    <location>
        <begin position="21"/>
        <end position="39"/>
    </location>
</feature>
<feature type="transmembrane region" description="Helical" evidence="1">
    <location>
        <begin position="44"/>
        <end position="64"/>
    </location>
</feature>
<feature type="transmembrane region" description="Helical" evidence="1">
    <location>
        <begin position="85"/>
        <end position="105"/>
    </location>
</feature>
<feature type="transmembrane region" description="Helical" evidence="1">
    <location>
        <begin position="109"/>
        <end position="129"/>
    </location>
</feature>
<feature type="transmembrane region" description="Helical" evidence="1">
    <location>
        <begin position="185"/>
        <end position="205"/>
    </location>
</feature>
<feature type="transmembrane region" description="Helical" evidence="1">
    <location>
        <begin position="214"/>
        <end position="234"/>
    </location>
</feature>
<feature type="transmembrane region" description="Helical" evidence="1">
    <location>
        <begin position="247"/>
        <end position="267"/>
    </location>
</feature>
<evidence type="ECO:0000255" key="1">
    <source>
        <dbReference type="HAMAP-Rule" id="MF_01006"/>
    </source>
</evidence>
<organism>
    <name type="scientific">Verminephrobacter eiseniae (strain EF01-2)</name>
    <dbReference type="NCBI Taxonomy" id="391735"/>
    <lineage>
        <taxon>Bacteria</taxon>
        <taxon>Pseudomonadati</taxon>
        <taxon>Pseudomonadota</taxon>
        <taxon>Betaproteobacteria</taxon>
        <taxon>Burkholderiales</taxon>
        <taxon>Comamonadaceae</taxon>
        <taxon>Verminephrobacter</taxon>
    </lineage>
</organism>
<accession>A1WK80</accession>
<gene>
    <name evidence="1" type="primary">uppP</name>
    <name type="ordered locus">Veis_2289</name>
</gene>
<reference key="1">
    <citation type="submission" date="2006-12" db="EMBL/GenBank/DDBJ databases">
        <title>Complete sequence of chromosome 1 of Verminephrobacter eiseniae EF01-2.</title>
        <authorList>
            <person name="Copeland A."/>
            <person name="Lucas S."/>
            <person name="Lapidus A."/>
            <person name="Barry K."/>
            <person name="Detter J.C."/>
            <person name="Glavina del Rio T."/>
            <person name="Dalin E."/>
            <person name="Tice H."/>
            <person name="Pitluck S."/>
            <person name="Chertkov O."/>
            <person name="Brettin T."/>
            <person name="Bruce D."/>
            <person name="Han C."/>
            <person name="Tapia R."/>
            <person name="Gilna P."/>
            <person name="Schmutz J."/>
            <person name="Larimer F."/>
            <person name="Land M."/>
            <person name="Hauser L."/>
            <person name="Kyrpides N."/>
            <person name="Kim E."/>
            <person name="Stahl D."/>
            <person name="Richardson P."/>
        </authorList>
    </citation>
    <scope>NUCLEOTIDE SEQUENCE [LARGE SCALE GENOMIC DNA]</scope>
    <source>
        <strain>EF01-2</strain>
    </source>
</reference>
<dbReference type="EC" id="3.6.1.27" evidence="1"/>
<dbReference type="EMBL" id="CP000542">
    <property type="protein sequence ID" value="ABM58037.1"/>
    <property type="molecule type" value="Genomic_DNA"/>
</dbReference>
<dbReference type="RefSeq" id="WP_011810040.1">
    <property type="nucleotide sequence ID" value="NC_008786.1"/>
</dbReference>
<dbReference type="SMR" id="A1WK80"/>
<dbReference type="STRING" id="391735.Veis_2289"/>
<dbReference type="GeneID" id="76460853"/>
<dbReference type="KEGG" id="vei:Veis_2289"/>
<dbReference type="eggNOG" id="COG1968">
    <property type="taxonomic scope" value="Bacteria"/>
</dbReference>
<dbReference type="HOGENOM" id="CLU_060296_2_0_4"/>
<dbReference type="OrthoDB" id="9808289at2"/>
<dbReference type="Proteomes" id="UP000000374">
    <property type="component" value="Chromosome"/>
</dbReference>
<dbReference type="GO" id="GO:0005886">
    <property type="term" value="C:plasma membrane"/>
    <property type="evidence" value="ECO:0007669"/>
    <property type="project" value="UniProtKB-SubCell"/>
</dbReference>
<dbReference type="GO" id="GO:0050380">
    <property type="term" value="F:undecaprenyl-diphosphatase activity"/>
    <property type="evidence" value="ECO:0007669"/>
    <property type="project" value="UniProtKB-UniRule"/>
</dbReference>
<dbReference type="GO" id="GO:0071555">
    <property type="term" value="P:cell wall organization"/>
    <property type="evidence" value="ECO:0007669"/>
    <property type="project" value="UniProtKB-KW"/>
</dbReference>
<dbReference type="GO" id="GO:0009252">
    <property type="term" value="P:peptidoglycan biosynthetic process"/>
    <property type="evidence" value="ECO:0007669"/>
    <property type="project" value="UniProtKB-KW"/>
</dbReference>
<dbReference type="GO" id="GO:0008360">
    <property type="term" value="P:regulation of cell shape"/>
    <property type="evidence" value="ECO:0007669"/>
    <property type="project" value="UniProtKB-KW"/>
</dbReference>
<dbReference type="GO" id="GO:0046677">
    <property type="term" value="P:response to antibiotic"/>
    <property type="evidence" value="ECO:0007669"/>
    <property type="project" value="UniProtKB-UniRule"/>
</dbReference>
<dbReference type="HAMAP" id="MF_01006">
    <property type="entry name" value="Undec_diphosphatase"/>
    <property type="match status" value="1"/>
</dbReference>
<dbReference type="InterPro" id="IPR003824">
    <property type="entry name" value="UppP"/>
</dbReference>
<dbReference type="NCBIfam" id="NF001389">
    <property type="entry name" value="PRK00281.1-2"/>
    <property type="match status" value="1"/>
</dbReference>
<dbReference type="NCBIfam" id="NF001390">
    <property type="entry name" value="PRK00281.1-4"/>
    <property type="match status" value="1"/>
</dbReference>
<dbReference type="NCBIfam" id="TIGR00753">
    <property type="entry name" value="undec_PP_bacA"/>
    <property type="match status" value="1"/>
</dbReference>
<dbReference type="PANTHER" id="PTHR30622">
    <property type="entry name" value="UNDECAPRENYL-DIPHOSPHATASE"/>
    <property type="match status" value="1"/>
</dbReference>
<dbReference type="PANTHER" id="PTHR30622:SF3">
    <property type="entry name" value="UNDECAPRENYL-DIPHOSPHATASE"/>
    <property type="match status" value="1"/>
</dbReference>
<dbReference type="Pfam" id="PF02673">
    <property type="entry name" value="BacA"/>
    <property type="match status" value="1"/>
</dbReference>
<proteinExistence type="inferred from homology"/>
<comment type="function">
    <text evidence="1">Catalyzes the dephosphorylation of undecaprenyl diphosphate (UPP). Confers resistance to bacitracin.</text>
</comment>
<comment type="catalytic activity">
    <reaction evidence="1">
        <text>di-trans,octa-cis-undecaprenyl diphosphate + H2O = di-trans,octa-cis-undecaprenyl phosphate + phosphate + H(+)</text>
        <dbReference type="Rhea" id="RHEA:28094"/>
        <dbReference type="ChEBI" id="CHEBI:15377"/>
        <dbReference type="ChEBI" id="CHEBI:15378"/>
        <dbReference type="ChEBI" id="CHEBI:43474"/>
        <dbReference type="ChEBI" id="CHEBI:58405"/>
        <dbReference type="ChEBI" id="CHEBI:60392"/>
        <dbReference type="EC" id="3.6.1.27"/>
    </reaction>
</comment>
<comment type="subcellular location">
    <subcellularLocation>
        <location evidence="1">Cell inner membrane</location>
        <topology evidence="1">Multi-pass membrane protein</topology>
    </subcellularLocation>
</comment>
<comment type="miscellaneous">
    <text>Bacitracin is thought to be involved in the inhibition of peptidoglycan synthesis by sequestering undecaprenyl diphosphate, thereby reducing the pool of lipid carrier available.</text>
</comment>
<comment type="similarity">
    <text evidence="1">Belongs to the UppP family.</text>
</comment>
<protein>
    <recommendedName>
        <fullName evidence="1">Undecaprenyl-diphosphatase</fullName>
        <ecNumber evidence="1">3.6.1.27</ecNumber>
    </recommendedName>
    <alternativeName>
        <fullName evidence="1">Bacitracin resistance protein</fullName>
    </alternativeName>
    <alternativeName>
        <fullName evidence="1">Undecaprenyl pyrophosphate phosphatase</fullName>
    </alternativeName>
</protein>
<name>UPPP_VEREI</name>
<keyword id="KW-0046">Antibiotic resistance</keyword>
<keyword id="KW-0997">Cell inner membrane</keyword>
<keyword id="KW-1003">Cell membrane</keyword>
<keyword id="KW-0133">Cell shape</keyword>
<keyword id="KW-0961">Cell wall biogenesis/degradation</keyword>
<keyword id="KW-0378">Hydrolase</keyword>
<keyword id="KW-0472">Membrane</keyword>
<keyword id="KW-0573">Peptidoglycan synthesis</keyword>
<keyword id="KW-1185">Reference proteome</keyword>
<keyword id="KW-0812">Transmembrane</keyword>
<keyword id="KW-1133">Transmembrane helix</keyword>